<proteinExistence type="inferred from homology"/>
<sequence length="435" mass="48770">MQRTPRMENLQARFDAVQDQLIDIYEKDTRSLEVQVTYWNLIRREQALFYYARQQGITRLGLYQVPLTSVSERKAKEAIKMSMYLTSLQKSPFAQLSWSLSETSPEMFFAPPESTFKKKGSHVTVVYDKDSNNAMEYAVWGEVFYVDETDTWHKAQSKVDYDGVYYTDAEGKKVYYVHFADDAAHYSVLGQWEVHFENNVLSPPVTSSFPGGPGRRQRPQTGSYSPGHKAPVTSRRRHSSSSDSHSSRRGSRPQSLSRSRSRSRSRSRSPSGSHARQRAPQDSGTNKSPGRQGGRRGDGGGGRGGGGGGVRVREDTFGGQPTQIAGRLGDRPAKAPEQTSRRLAQLIESANDPPVLLLQGCANTLKCFRRRTSHAHPHKFLCMSTSWTWSCKTTTHKSCHRMLVAFSDYEQRRCFLAGVKLPKGVTCVKGSLEAL</sequence>
<feature type="chain" id="PRO_0000133177" description="Regulatory protein E2">
    <location>
        <begin position="1"/>
        <end position="435"/>
    </location>
</feature>
<feature type="region of interest" description="Transactivation domain" evidence="1">
    <location>
        <begin position="1"/>
        <end position="208"/>
    </location>
</feature>
<feature type="region of interest" description="Disordered" evidence="2">
    <location>
        <begin position="203"/>
        <end position="339"/>
    </location>
</feature>
<feature type="region of interest" description="DNA-binding domain" evidence="1">
    <location>
        <begin position="352"/>
        <end position="435"/>
    </location>
</feature>
<feature type="compositionally biased region" description="Polar residues" evidence="2">
    <location>
        <begin position="280"/>
        <end position="289"/>
    </location>
</feature>
<feature type="compositionally biased region" description="Gly residues" evidence="2">
    <location>
        <begin position="299"/>
        <end position="310"/>
    </location>
</feature>
<accession>Q705F3</accession>
<reference key="1">
    <citation type="submission" date="2004-01" db="EMBL/GenBank/DDBJ databases">
        <title>Sequencing of the complete genomes of BPV 3, BPV 5 and BPV 6.</title>
        <authorList>
            <person name="Delius H."/>
            <person name="de Villiers E.M."/>
        </authorList>
    </citation>
    <scope>NUCLEOTIDE SEQUENCE [GENOMIC DNA]</scope>
</reference>
<dbReference type="EMBL" id="AJ620208">
    <property type="protein sequence ID" value="CAF05688.1"/>
    <property type="molecule type" value="Genomic_DNA"/>
</dbReference>
<dbReference type="SMR" id="Q705F3"/>
<dbReference type="Proteomes" id="UP000117755">
    <property type="component" value="Genome"/>
</dbReference>
<dbReference type="GO" id="GO:0042025">
    <property type="term" value="C:host cell nucleus"/>
    <property type="evidence" value="ECO:0007669"/>
    <property type="project" value="UniProtKB-SubCell"/>
</dbReference>
<dbReference type="GO" id="GO:0003677">
    <property type="term" value="F:DNA binding"/>
    <property type="evidence" value="ECO:0007669"/>
    <property type="project" value="UniProtKB-UniRule"/>
</dbReference>
<dbReference type="GO" id="GO:0003700">
    <property type="term" value="F:DNA-binding transcription factor activity"/>
    <property type="evidence" value="ECO:0007669"/>
    <property type="project" value="UniProtKB-UniRule"/>
</dbReference>
<dbReference type="GO" id="GO:0000166">
    <property type="term" value="F:nucleotide binding"/>
    <property type="evidence" value="ECO:0007669"/>
    <property type="project" value="UniProtKB-UniRule"/>
</dbReference>
<dbReference type="GO" id="GO:0006260">
    <property type="term" value="P:DNA replication"/>
    <property type="evidence" value="ECO:0007669"/>
    <property type="project" value="UniProtKB-KW"/>
</dbReference>
<dbReference type="GO" id="GO:0006351">
    <property type="term" value="P:DNA-templated transcription"/>
    <property type="evidence" value="ECO:0007669"/>
    <property type="project" value="UniProtKB-UniRule"/>
</dbReference>
<dbReference type="GO" id="GO:0006275">
    <property type="term" value="P:regulation of DNA replication"/>
    <property type="evidence" value="ECO:0007669"/>
    <property type="project" value="UniProtKB-UniRule"/>
</dbReference>
<dbReference type="GO" id="GO:0039693">
    <property type="term" value="P:viral DNA genome replication"/>
    <property type="evidence" value="ECO:0007669"/>
    <property type="project" value="UniProtKB-UniRule"/>
</dbReference>
<dbReference type="Gene3D" id="3.30.70.330">
    <property type="match status" value="1"/>
</dbReference>
<dbReference type="Gene3D" id="1.10.287.30">
    <property type="entry name" value="E2 (early) protein, N terminal domain, subdomain 1"/>
    <property type="match status" value="1"/>
</dbReference>
<dbReference type="Gene3D" id="2.170.200.10">
    <property type="entry name" value="Papillomavirus E2 early protein domain"/>
    <property type="match status" value="1"/>
</dbReference>
<dbReference type="HAMAP" id="MF_04001">
    <property type="entry name" value="PPV_E2"/>
    <property type="match status" value="1"/>
</dbReference>
<dbReference type="InterPro" id="IPR035975">
    <property type="entry name" value="E2/EBNA1_C_sf"/>
</dbReference>
<dbReference type="InterPro" id="IPR012677">
    <property type="entry name" value="Nucleotide-bd_a/b_plait_sf"/>
</dbReference>
<dbReference type="InterPro" id="IPR000427">
    <property type="entry name" value="Papillomavirus_E2_C"/>
</dbReference>
<dbReference type="InterPro" id="IPR001866">
    <property type="entry name" value="PPV_E2_N"/>
</dbReference>
<dbReference type="InterPro" id="IPR033668">
    <property type="entry name" value="Reg_prot_E2"/>
</dbReference>
<dbReference type="InterPro" id="IPR036050">
    <property type="entry name" value="Regulatory_protein_E2_N"/>
</dbReference>
<dbReference type="InterPro" id="IPR042503">
    <property type="entry name" value="Regulatory_protein_E2_N_1"/>
</dbReference>
<dbReference type="InterPro" id="IPR042504">
    <property type="entry name" value="Regulatory_protein_E2_N_2"/>
</dbReference>
<dbReference type="Pfam" id="PF00511">
    <property type="entry name" value="PPV_E2_C"/>
    <property type="match status" value="1"/>
</dbReference>
<dbReference type="Pfam" id="PF00508">
    <property type="entry name" value="PPV_E2_N"/>
    <property type="match status" value="1"/>
</dbReference>
<dbReference type="SUPFAM" id="SSF51332">
    <property type="entry name" value="E2 regulatory, transactivation domain"/>
    <property type="match status" value="1"/>
</dbReference>
<dbReference type="SUPFAM" id="SSF54957">
    <property type="entry name" value="Viral DNA-binding domain"/>
    <property type="match status" value="1"/>
</dbReference>
<name>VE2_BPV6</name>
<gene>
    <name evidence="1" type="primary">E2</name>
</gene>
<comment type="function">
    <text evidence="1">Plays a role in the initiation of viral DNA replication. A dimer of E2 interacts with a dimer of E1 in order to improve specificity of E1 DNA binding activity. Once the complex recognizes and binds DNA at specific sites, the E2 dimer is removed from DNA. E2 also regulates viral transcription through binding to the E2RE response element (5'-ACCNNNNNNGGT-3') present in multiple copies in the regulatory regions of the viral genome. Activates or represses transcription depending on E2RE's position with regards to proximal promoter elements including the TATA-box. Repression occurs by sterically hindering the assembly of the transcription initiation complex.</text>
</comment>
<comment type="subunit">
    <text evidence="1">Binds DNA as homodimer. Interacts with protein E1; this interaction greatly increases E1 DNA-binding activity. Interacts with protein L1; this interaction enhances E2-dependent replication and transcription activation. Interacts with protein L2; this interaction inhibits E2 transcriptional activity but not DNA replication function E2. Interacts with protein E7; this interaction inhibits E7 oncogenic activity. Interacts with host TAF1; this interaction modulates E2-dependent transcriptional regulation. Interacts with host BRD4; this interaction mediates E2 transcriptional activation function. Additionally, the interaction with host BRD4 on mitotic chromosomes mediates tethering of the viral genome. Interacts with host TOPBP1; this interaction is required for optimal viral DNA replication.</text>
</comment>
<comment type="subcellular location">
    <subcellularLocation>
        <location evidence="1">Host nucleus</location>
    </subcellularLocation>
</comment>
<comment type="PTM">
    <text evidence="1">Phosphorylated.</text>
</comment>
<comment type="similarity">
    <text evidence="1">Belongs to the papillomaviridae E2 protein family.</text>
</comment>
<evidence type="ECO:0000255" key="1">
    <source>
        <dbReference type="HAMAP-Rule" id="MF_04001"/>
    </source>
</evidence>
<evidence type="ECO:0000256" key="2">
    <source>
        <dbReference type="SAM" id="MobiDB-lite"/>
    </source>
</evidence>
<protein>
    <recommendedName>
        <fullName evidence="1">Regulatory protein E2</fullName>
    </recommendedName>
</protein>
<keyword id="KW-0010">Activator</keyword>
<keyword id="KW-0235">DNA replication</keyword>
<keyword id="KW-0238">DNA-binding</keyword>
<keyword id="KW-0244">Early protein</keyword>
<keyword id="KW-1048">Host nucleus</keyword>
<keyword id="KW-0597">Phosphoprotein</keyword>
<keyword id="KW-0678">Repressor</keyword>
<keyword id="KW-0804">Transcription</keyword>
<keyword id="KW-0805">Transcription regulation</keyword>
<organism>
    <name type="scientific">Bos taurus papillomavirus 6</name>
    <name type="common">Bovine papillomavirus 6</name>
    <dbReference type="NCBI Taxonomy" id="10563"/>
    <lineage>
        <taxon>Viruses</taxon>
        <taxon>Monodnaviria</taxon>
        <taxon>Shotokuvirae</taxon>
        <taxon>Cossaviricota</taxon>
        <taxon>Papovaviricetes</taxon>
        <taxon>Zurhausenvirales</taxon>
        <taxon>Papillomaviridae</taxon>
        <taxon>Firstpapillomavirinae</taxon>
        <taxon>Xipapillomavirus</taxon>
        <taxon>Xipapillomavirus 1</taxon>
    </lineage>
</organism>
<organismHost>
    <name type="scientific">Bos taurus</name>
    <name type="common">Bovine</name>
    <dbReference type="NCBI Taxonomy" id="9913"/>
</organismHost>